<comment type="function">
    <text>Involved in the synthesis of neoxanthin, the last product of carotenoid synthesis and a precursor of abscisic acid.</text>
</comment>
<comment type="catalytic activity">
    <reaction evidence="3">
        <text>all-trans-violaxanthin = all-trans-neoxanthin</text>
        <dbReference type="Rhea" id="RHEA:10128"/>
        <dbReference type="ChEBI" id="CHEBI:32446"/>
        <dbReference type="ChEBI" id="CHEBI:35288"/>
        <dbReference type="EC" id="5.3.99.9"/>
    </reaction>
</comment>
<comment type="pathway">
    <text>Carotenoid biosynthesis; neoxanthin biosynthesis.</text>
</comment>
<comment type="subcellular location">
    <subcellularLocation>
        <location evidence="3">Plastid</location>
        <location evidence="3">Chloroplast</location>
    </subcellularLocation>
</comment>
<comment type="similarity">
    <text evidence="4">Belongs to the lycopene cyclase family.</text>
</comment>
<accession>Q9M424</accession>
<name>NXS_SOLTU</name>
<organism>
    <name type="scientific">Solanum tuberosum</name>
    <name type="common">Potato</name>
    <dbReference type="NCBI Taxonomy" id="4113"/>
    <lineage>
        <taxon>Eukaryota</taxon>
        <taxon>Viridiplantae</taxon>
        <taxon>Streptophyta</taxon>
        <taxon>Embryophyta</taxon>
        <taxon>Tracheophyta</taxon>
        <taxon>Spermatophyta</taxon>
        <taxon>Magnoliopsida</taxon>
        <taxon>eudicotyledons</taxon>
        <taxon>Gunneridae</taxon>
        <taxon>Pentapetalae</taxon>
        <taxon>asterids</taxon>
        <taxon>lamiids</taxon>
        <taxon>Solanales</taxon>
        <taxon>Solanaceae</taxon>
        <taxon>Solanoideae</taxon>
        <taxon>Solaneae</taxon>
        <taxon>Solanum</taxon>
    </lineage>
</organism>
<protein>
    <recommendedName>
        <fullName>Neoxanthin synthase, chloroplastic</fullName>
        <ecNumber>5.3.99.9</ecNumber>
    </recommendedName>
</protein>
<evidence type="ECO:0000255" key="1"/>
<evidence type="ECO:0000256" key="2">
    <source>
        <dbReference type="SAM" id="MobiDB-lite"/>
    </source>
</evidence>
<evidence type="ECO:0000269" key="3">
    <source>
    </source>
</evidence>
<evidence type="ECO:0000305" key="4"/>
<gene>
    <name type="primary">NXS</name>
</gene>
<feature type="transit peptide" description="Chloroplast" evidence="1">
    <location>
        <begin position="1"/>
        <end position="33"/>
    </location>
</feature>
<feature type="chain" id="PRO_0000386524" description="Neoxanthin synthase, chloroplastic">
    <location>
        <begin position="34"/>
        <end position="498"/>
    </location>
</feature>
<feature type="region of interest" description="Disordered" evidence="2">
    <location>
        <begin position="16"/>
        <end position="38"/>
    </location>
</feature>
<feature type="compositionally biased region" description="Polar residues" evidence="2">
    <location>
        <begin position="22"/>
        <end position="33"/>
    </location>
</feature>
<feature type="binding site" evidence="1">
    <location>
        <begin position="84"/>
        <end position="112"/>
    </location>
    <ligand>
        <name>NAD(+)</name>
        <dbReference type="ChEBI" id="CHEBI:57540"/>
    </ligand>
</feature>
<sequence>METLLKPLTSLLLSSPTPHRSIFQQNPPSLNPTTKKKSRKCHFRNESSKLFCSFLDLAPISKPESFDVNISLVDPNSGRAQFDVIIIGAGPAGLRLAEHVSKYGIKVCCVDPSPLSMWPNNYGVWVDEFENLGLEDCLDHKWPMTCVHINDHKTKYLGRPYGRVSRKKLKLRLLNSCVENRVKFYKAKVWKVEHEEFESSIVCDDGKKIRGSLVVDASGFASDFIEYDKPRNHGYQIAHGVLVEVDNHPFDLDKMVLMDWRDSHLGNEPYLRVNNAKEPTFLYAMPFDRNLVFLEETSLVSRPVLSYMEVKRRMVARLRHLGIKVRSVIEEEKCVIPMGGPLPRIPQNVMAIGGNSGIVHPSTGYMVARSMALAPVLAEAIVKGLGSTRMIRGSQLYHRVWNGLWPLDRRCIGECYSFGMETLLKLDLKGTRRLFDAFFDLDPKYWQGFLSSRLSVKELAILSLCLFGHGSNLTRLDIVTKCPVPLVRLIGNLAIESL</sequence>
<proteinExistence type="evidence at protein level"/>
<keyword id="KW-0150">Chloroplast</keyword>
<keyword id="KW-0413">Isomerase</keyword>
<keyword id="KW-0934">Plastid</keyword>
<keyword id="KW-1185">Reference proteome</keyword>
<keyword id="KW-0809">Transit peptide</keyword>
<reference key="1">
    <citation type="journal article" date="2000" name="FEBS Lett.">
        <title>Identification of a novel gene coding for neoxanthin synthase from Solanum tuberosum.</title>
        <authorList>
            <person name="Al-Babili S."/>
            <person name="Hugueney P."/>
            <person name="Schledz M."/>
            <person name="Welsch R."/>
            <person name="Frohnmeyer H."/>
            <person name="Laule O."/>
            <person name="Beyer P."/>
        </authorList>
    </citation>
    <scope>NUCLEOTIDE SEQUENCE [MRNA]</scope>
    <scope>CATALYTIC ACTIVITY</scope>
    <scope>SUBCELLULAR LOCATION</scope>
    <source>
        <strain>cv. Desiree</strain>
        <tissue>Tuber</tissue>
    </source>
</reference>
<dbReference type="EC" id="5.3.99.9"/>
<dbReference type="EMBL" id="AJ272136">
    <property type="protein sequence ID" value="CAB92977.1"/>
    <property type="molecule type" value="mRNA"/>
</dbReference>
<dbReference type="RefSeq" id="NP_001305601.1">
    <property type="nucleotide sequence ID" value="NM_001318672.1"/>
</dbReference>
<dbReference type="SMR" id="Q9M424"/>
<dbReference type="STRING" id="4113.Q9M424"/>
<dbReference type="PaxDb" id="4113-PGSC0003DMT400015066"/>
<dbReference type="GeneID" id="102601215"/>
<dbReference type="KEGG" id="sot:102601215"/>
<dbReference type="eggNOG" id="ENOG502QQD7">
    <property type="taxonomic scope" value="Eukaryota"/>
</dbReference>
<dbReference type="InParanoid" id="Q9M424"/>
<dbReference type="OrthoDB" id="1716816at2759"/>
<dbReference type="BioCyc" id="MetaCyc:MONOMER-16625"/>
<dbReference type="BRENDA" id="5.3.99.9">
    <property type="organism ID" value="5757"/>
</dbReference>
<dbReference type="UniPathway" id="UPA00388"/>
<dbReference type="Proteomes" id="UP000011115">
    <property type="component" value="Unassembled WGS sequence"/>
</dbReference>
<dbReference type="ExpressionAtlas" id="Q9M424">
    <property type="expression patterns" value="baseline"/>
</dbReference>
<dbReference type="GO" id="GO:0009507">
    <property type="term" value="C:chloroplast"/>
    <property type="evidence" value="ECO:0007669"/>
    <property type="project" value="UniProtKB-SubCell"/>
</dbReference>
<dbReference type="GO" id="GO:0005739">
    <property type="term" value="C:mitochondrion"/>
    <property type="evidence" value="ECO:0000318"/>
    <property type="project" value="GO_Central"/>
</dbReference>
<dbReference type="GO" id="GO:0009536">
    <property type="term" value="C:plastid"/>
    <property type="evidence" value="ECO:0000314"/>
    <property type="project" value="UniProtKB"/>
</dbReference>
<dbReference type="GO" id="GO:0045436">
    <property type="term" value="F:lycopene beta cyclase activity"/>
    <property type="evidence" value="ECO:0000318"/>
    <property type="project" value="GO_Central"/>
</dbReference>
<dbReference type="GO" id="GO:0034020">
    <property type="term" value="F:neoxanthin synthase activity"/>
    <property type="evidence" value="ECO:0000314"/>
    <property type="project" value="UniProtKB"/>
</dbReference>
<dbReference type="GO" id="GO:0016491">
    <property type="term" value="F:oxidoreductase activity"/>
    <property type="evidence" value="ECO:0000318"/>
    <property type="project" value="GO_Central"/>
</dbReference>
<dbReference type="GO" id="GO:0016705">
    <property type="term" value="F:oxidoreductase activity, acting on paired donors, with incorporation or reduction of molecular oxygen"/>
    <property type="evidence" value="ECO:0007669"/>
    <property type="project" value="InterPro"/>
</dbReference>
<dbReference type="GO" id="GO:0009688">
    <property type="term" value="P:abscisic acid biosynthetic process"/>
    <property type="evidence" value="ECO:0000305"/>
    <property type="project" value="UniProtKB"/>
</dbReference>
<dbReference type="GO" id="GO:0016120">
    <property type="term" value="P:carotene biosynthetic process"/>
    <property type="evidence" value="ECO:0000318"/>
    <property type="project" value="GO_Central"/>
</dbReference>
<dbReference type="GO" id="GO:0006744">
    <property type="term" value="P:ubiquinone biosynthetic process"/>
    <property type="evidence" value="ECO:0000318"/>
    <property type="project" value="GO_Central"/>
</dbReference>
<dbReference type="GO" id="GO:0016123">
    <property type="term" value="P:xanthophyll biosynthetic process"/>
    <property type="evidence" value="ECO:0000314"/>
    <property type="project" value="UniProtKB"/>
</dbReference>
<dbReference type="FunFam" id="3.50.50.60:FF:000101">
    <property type="entry name" value="lycopene epsilon cyclase, chloroplastic"/>
    <property type="match status" value="1"/>
</dbReference>
<dbReference type="Gene3D" id="3.50.50.60">
    <property type="entry name" value="FAD/NAD(P)-binding domain"/>
    <property type="match status" value="1"/>
</dbReference>
<dbReference type="InterPro" id="IPR036188">
    <property type="entry name" value="FAD/NAD-bd_sf"/>
</dbReference>
<dbReference type="InterPro" id="IPR010108">
    <property type="entry name" value="Lycopene_cyclase_b/e"/>
</dbReference>
<dbReference type="NCBIfam" id="TIGR01790">
    <property type="entry name" value="carotene-cycl"/>
    <property type="match status" value="1"/>
</dbReference>
<dbReference type="PANTHER" id="PTHR39757">
    <property type="match status" value="1"/>
</dbReference>
<dbReference type="PANTHER" id="PTHR39757:SF9">
    <property type="entry name" value="CAPSANTHIN_CAPSORUBIN SYNTHASE, CHROMOPLAST PROTEIN"/>
    <property type="match status" value="1"/>
</dbReference>
<dbReference type="Pfam" id="PF05834">
    <property type="entry name" value="Lycopene_cycl"/>
    <property type="match status" value="1"/>
</dbReference>
<dbReference type="SUPFAM" id="SSF51905">
    <property type="entry name" value="FAD/NAD(P)-binding domain"/>
    <property type="match status" value="1"/>
</dbReference>